<keyword id="KW-0496">Mitochondrion</keyword>
<keyword id="KW-1185">Reference proteome</keyword>
<keyword id="KW-0687">Ribonucleoprotein</keyword>
<keyword id="KW-0689">Ribosomal protein</keyword>
<name>RT25_COCIM</name>
<gene>
    <name type="primary">RSM25</name>
    <name type="ORF">CIMG_04077</name>
</gene>
<reference key="1">
    <citation type="journal article" date="2009" name="Genome Res.">
        <title>Comparative genomic analyses of the human fungal pathogens Coccidioides and their relatives.</title>
        <authorList>
            <person name="Sharpton T.J."/>
            <person name="Stajich J.E."/>
            <person name="Rounsley S.D."/>
            <person name="Gardner M.J."/>
            <person name="Wortman J.R."/>
            <person name="Jordar V.S."/>
            <person name="Maiti R."/>
            <person name="Kodira C.D."/>
            <person name="Neafsey D.E."/>
            <person name="Zeng Q."/>
            <person name="Hung C.-Y."/>
            <person name="McMahan C."/>
            <person name="Muszewska A."/>
            <person name="Grynberg M."/>
            <person name="Mandel M.A."/>
            <person name="Kellner E.M."/>
            <person name="Barker B.M."/>
            <person name="Galgiani J.N."/>
            <person name="Orbach M.J."/>
            <person name="Kirkland T.N."/>
            <person name="Cole G.T."/>
            <person name="Henn M.R."/>
            <person name="Birren B.W."/>
            <person name="Taylor J.W."/>
        </authorList>
    </citation>
    <scope>NUCLEOTIDE SEQUENCE [LARGE SCALE GENOMIC DNA]</scope>
    <source>
        <strain>RS</strain>
    </source>
</reference>
<reference key="2">
    <citation type="journal article" date="2010" name="Genome Res.">
        <title>Population genomic sequencing of Coccidioides fungi reveals recent hybridization and transposon control.</title>
        <authorList>
            <person name="Neafsey D.E."/>
            <person name="Barker B.M."/>
            <person name="Sharpton T.J."/>
            <person name="Stajich J.E."/>
            <person name="Park D.J."/>
            <person name="Whiston E."/>
            <person name="Hung C.-Y."/>
            <person name="McMahan C."/>
            <person name="White J."/>
            <person name="Sykes S."/>
            <person name="Heiman D."/>
            <person name="Young S."/>
            <person name="Zeng Q."/>
            <person name="Abouelleil A."/>
            <person name="Aftuck L."/>
            <person name="Bessette D."/>
            <person name="Brown A."/>
            <person name="FitzGerald M."/>
            <person name="Lui A."/>
            <person name="Macdonald J.P."/>
            <person name="Priest M."/>
            <person name="Orbach M.J."/>
            <person name="Galgiani J.N."/>
            <person name="Kirkland T.N."/>
            <person name="Cole G.T."/>
            <person name="Birren B.W."/>
            <person name="Henn M.R."/>
            <person name="Taylor J.W."/>
            <person name="Rounsley S.D."/>
        </authorList>
    </citation>
    <scope>GENOME REANNOTATION</scope>
    <source>
        <strain>RS</strain>
    </source>
</reference>
<organism>
    <name type="scientific">Coccidioides immitis (strain RS)</name>
    <name type="common">Valley fever fungus</name>
    <dbReference type="NCBI Taxonomy" id="246410"/>
    <lineage>
        <taxon>Eukaryota</taxon>
        <taxon>Fungi</taxon>
        <taxon>Dikarya</taxon>
        <taxon>Ascomycota</taxon>
        <taxon>Pezizomycotina</taxon>
        <taxon>Eurotiomycetes</taxon>
        <taxon>Eurotiomycetidae</taxon>
        <taxon>Onygenales</taxon>
        <taxon>Onygenaceae</taxon>
        <taxon>Coccidioides</taxon>
    </lineage>
</organism>
<accession>Q1E036</accession>
<accession>J3KD61</accession>
<comment type="subunit">
    <text evidence="1">Component of the mitochondrial small ribosomal subunit.</text>
</comment>
<comment type="subcellular location">
    <subcellularLocation>
        <location evidence="1">Mitochondrion</location>
    </subcellularLocation>
</comment>
<comment type="similarity">
    <text evidence="3">Belongs to the mitochondrion-specific ribosomal protein mS23 family.</text>
</comment>
<protein>
    <recommendedName>
        <fullName evidence="3">Small ribosomal subunit protein mS23</fullName>
    </recommendedName>
    <alternativeName>
        <fullName>37S ribosomal protein S25, mitochondrial</fullName>
    </alternativeName>
</protein>
<evidence type="ECO:0000250" key="1"/>
<evidence type="ECO:0000256" key="2">
    <source>
        <dbReference type="SAM" id="MobiDB-lite"/>
    </source>
</evidence>
<evidence type="ECO:0000305" key="3"/>
<dbReference type="EMBL" id="GG704916">
    <property type="protein sequence ID" value="EAS33053.3"/>
    <property type="molecule type" value="Genomic_DNA"/>
</dbReference>
<dbReference type="RefSeq" id="XP_001244636.1">
    <property type="nucleotide sequence ID" value="XM_001244635.2"/>
</dbReference>
<dbReference type="SMR" id="Q1E036"/>
<dbReference type="FunCoup" id="Q1E036">
    <property type="interactions" value="119"/>
</dbReference>
<dbReference type="STRING" id="246410.Q1E036"/>
<dbReference type="GeneID" id="4563010"/>
<dbReference type="KEGG" id="cim:CIMG_04077"/>
<dbReference type="VEuPathDB" id="FungiDB:CIMG_04077"/>
<dbReference type="InParanoid" id="Q1E036"/>
<dbReference type="OMA" id="ENWKIWA"/>
<dbReference type="OrthoDB" id="5542239at2759"/>
<dbReference type="Proteomes" id="UP000001261">
    <property type="component" value="Unassembled WGS sequence"/>
</dbReference>
<dbReference type="GO" id="GO:0005763">
    <property type="term" value="C:mitochondrial small ribosomal subunit"/>
    <property type="evidence" value="ECO:0007669"/>
    <property type="project" value="InterPro"/>
</dbReference>
<dbReference type="GO" id="GO:0003735">
    <property type="term" value="F:structural constituent of ribosome"/>
    <property type="evidence" value="ECO:0007669"/>
    <property type="project" value="InterPro"/>
</dbReference>
<dbReference type="InterPro" id="IPR016939">
    <property type="entry name" value="Ribosomal_mS23_fun"/>
</dbReference>
<dbReference type="PANTHER" id="PTHR37799">
    <property type="entry name" value="37S RIBOSOMAL PROTEIN S25, MITOCHONDRIAL"/>
    <property type="match status" value="1"/>
</dbReference>
<dbReference type="PANTHER" id="PTHR37799:SF1">
    <property type="entry name" value="SMALL RIBOSOMAL SUBUNIT PROTEIN MS23"/>
    <property type="match status" value="1"/>
</dbReference>
<dbReference type="Pfam" id="PF13741">
    <property type="entry name" value="MRP-S25"/>
    <property type="match status" value="1"/>
</dbReference>
<dbReference type="PIRSF" id="PIRSF029764">
    <property type="entry name" value="RSM25"/>
    <property type="match status" value="1"/>
</dbReference>
<proteinExistence type="inferred from homology"/>
<feature type="chain" id="PRO_0000343549" description="Small ribosomal subunit protein mS23">
    <location>
        <begin position="1"/>
        <end position="272"/>
    </location>
</feature>
<feature type="region of interest" description="Disordered" evidence="2">
    <location>
        <begin position="236"/>
        <end position="272"/>
    </location>
</feature>
<sequence length="272" mass="31289">MGKFNLGALRVRQNALAQKSSGKISQTPCWVDIVSEIPPATVLVRNLPQQHALVQQRVKTLPGKSRPQTVIEEREIRRIKTKKASRMFQPMQIRYEEDELRKQFFQDHPWELARPRVVLETNGNDHARYDWSRLQQRGKRLDGESVVQRQLYLLNNVPDITKGEAYDIARREFYQLRLQEDIERRVAQEEARATGAYFGPDMMQVGMELENQEYDRWKIWAEKEAEQASQRLAAFAGATGGAKEESDPAILPELEVAESTSESAQPAEIRTG</sequence>